<evidence type="ECO:0000255" key="1"/>
<evidence type="ECO:0000256" key="2">
    <source>
        <dbReference type="SAM" id="MobiDB-lite"/>
    </source>
</evidence>
<evidence type="ECO:0000305" key="3"/>
<keyword id="KW-1003">Cell membrane</keyword>
<keyword id="KW-0472">Membrane</keyword>
<keyword id="KW-0732">Signal</keyword>
<keyword id="KW-0812">Transmembrane</keyword>
<keyword id="KW-1133">Transmembrane helix</keyword>
<comment type="subcellular location">
    <subcellularLocation>
        <location evidence="3">Cell membrane</location>
        <topology evidence="3">Multi-pass membrane protein</topology>
    </subcellularLocation>
</comment>
<comment type="caution">
    <text evidence="3">B.parapertussis and B.bronchiseptica seem not to produce the pertussis toxin (S1, S2, S4, S5 and S3) and ptl proteins (PtlA, PtlB, PtlC, PtlD, PtlE, PtlF, PtlG, PtlH and PtlI) in vivo due to changes in the promoter region of the ptx-ptl operon. However, it is possible that their promoter is active under certain, as-yet-undefined conditions and that B.parapertussis and B.bronchiseptica are therefore capable of producing these proteins.</text>
</comment>
<gene>
    <name type="primary">ptlD</name>
    <name type="ordered locus">BB4898</name>
</gene>
<accession>Q7WDU0</accession>
<protein>
    <recommendedName>
        <fullName>Type IV secretion system protein PtlD homolog</fullName>
    </recommendedName>
</protein>
<proteinExistence type="inferred from homology"/>
<dbReference type="EMBL" id="BX640451">
    <property type="protein sequence ID" value="CAE35261.1"/>
    <property type="molecule type" value="Genomic_DNA"/>
</dbReference>
<dbReference type="RefSeq" id="WP_003815860.1">
    <property type="nucleotide sequence ID" value="NC_002927.3"/>
</dbReference>
<dbReference type="SMR" id="Q7WDU0"/>
<dbReference type="KEGG" id="bbr:BB4898"/>
<dbReference type="HOGENOM" id="CLU_592732_0_0_4"/>
<dbReference type="Proteomes" id="UP000001027">
    <property type="component" value="Chromosome"/>
</dbReference>
<dbReference type="GO" id="GO:0005886">
    <property type="term" value="C:plasma membrane"/>
    <property type="evidence" value="ECO:0007669"/>
    <property type="project" value="UniProtKB-SubCell"/>
</dbReference>
<dbReference type="GO" id="GO:0030255">
    <property type="term" value="P:protein secretion by the type IV secretion system"/>
    <property type="evidence" value="ECO:0007669"/>
    <property type="project" value="InterPro"/>
</dbReference>
<dbReference type="InterPro" id="IPR007688">
    <property type="entry name" value="Conjugal_tfr_TrbL/VirB6"/>
</dbReference>
<dbReference type="Pfam" id="PF04610">
    <property type="entry name" value="TrbL"/>
    <property type="match status" value="1"/>
</dbReference>
<feature type="signal peptide" evidence="1">
    <location>
        <begin position="1"/>
        <end position="24"/>
    </location>
</feature>
<feature type="chain" id="PRO_0000287403" description="Type IV secretion system protein PtlD homolog">
    <location>
        <begin position="25"/>
        <end position="461"/>
    </location>
</feature>
<feature type="transmembrane region" description="Helical" evidence="1">
    <location>
        <begin position="118"/>
        <end position="138"/>
    </location>
</feature>
<feature type="transmembrane region" description="Helical" evidence="1">
    <location>
        <begin position="232"/>
        <end position="252"/>
    </location>
</feature>
<feature type="transmembrane region" description="Helical" evidence="1">
    <location>
        <begin position="253"/>
        <end position="273"/>
    </location>
</feature>
<feature type="transmembrane region" description="Helical" evidence="1">
    <location>
        <begin position="294"/>
        <end position="314"/>
    </location>
</feature>
<feature type="transmembrane region" description="Helical" evidence="1">
    <location>
        <begin position="333"/>
        <end position="353"/>
    </location>
</feature>
<feature type="region of interest" description="Disordered" evidence="2">
    <location>
        <begin position="376"/>
        <end position="461"/>
    </location>
</feature>
<feature type="compositionally biased region" description="Low complexity" evidence="2">
    <location>
        <begin position="376"/>
        <end position="411"/>
    </location>
</feature>
<feature type="compositionally biased region" description="Basic and acidic residues" evidence="2">
    <location>
        <begin position="439"/>
        <end position="453"/>
    </location>
</feature>
<reference key="1">
    <citation type="journal article" date="2003" name="Nat. Genet.">
        <title>Comparative analysis of the genome sequences of Bordetella pertussis, Bordetella parapertussis and Bordetella bronchiseptica.</title>
        <authorList>
            <person name="Parkhill J."/>
            <person name="Sebaihia M."/>
            <person name="Preston A."/>
            <person name="Murphy L.D."/>
            <person name="Thomson N.R."/>
            <person name="Harris D.E."/>
            <person name="Holden M.T.G."/>
            <person name="Churcher C.M."/>
            <person name="Bentley S.D."/>
            <person name="Mungall K.L."/>
            <person name="Cerdeno-Tarraga A.-M."/>
            <person name="Temple L."/>
            <person name="James K.D."/>
            <person name="Harris B."/>
            <person name="Quail M.A."/>
            <person name="Achtman M."/>
            <person name="Atkin R."/>
            <person name="Baker S."/>
            <person name="Basham D."/>
            <person name="Bason N."/>
            <person name="Cherevach I."/>
            <person name="Chillingworth T."/>
            <person name="Collins M."/>
            <person name="Cronin A."/>
            <person name="Davis P."/>
            <person name="Doggett J."/>
            <person name="Feltwell T."/>
            <person name="Goble A."/>
            <person name="Hamlin N."/>
            <person name="Hauser H."/>
            <person name="Holroyd S."/>
            <person name="Jagels K."/>
            <person name="Leather S."/>
            <person name="Moule S."/>
            <person name="Norberczak H."/>
            <person name="O'Neil S."/>
            <person name="Ormond D."/>
            <person name="Price C."/>
            <person name="Rabbinowitsch E."/>
            <person name="Rutter S."/>
            <person name="Sanders M."/>
            <person name="Saunders D."/>
            <person name="Seeger K."/>
            <person name="Sharp S."/>
            <person name="Simmonds M."/>
            <person name="Skelton J."/>
            <person name="Squares R."/>
            <person name="Squares S."/>
            <person name="Stevens K."/>
            <person name="Unwin L."/>
            <person name="Whitehead S."/>
            <person name="Barrell B.G."/>
            <person name="Maskell D.J."/>
        </authorList>
    </citation>
    <scope>NUCLEOTIDE SEQUENCE [LARGE SCALE GENOMIC DNA]</scope>
    <source>
        <strain>ATCC BAA-588 / NCTC 13252 / RB50</strain>
    </source>
</reference>
<reference key="2">
    <citation type="journal article" date="1987" name="J. Bacteriol.">
        <title>Bordetella parapertussis and Bordetella bronchiseptica contain transcriptionally silent pertussis toxin genes.</title>
        <authorList>
            <person name="Arico B."/>
            <person name="Rappuoli R."/>
        </authorList>
    </citation>
    <scope>TRANSCRIPTIONAL SILENCING</scope>
    <source>
        <strain>ATCC 4617 / NCIB 9935 / NCTC 8344 / NRRL B-140</strain>
    </source>
</reference>
<reference key="3">
    <citation type="journal article" date="1996" name="Infect. Immun.">
        <title>Analysis of proteins encoded by the ptx and ptl genes of Bordetella bronchiseptica and Bordetella parapertussis.</title>
        <authorList>
            <person name="Hausman S.Z."/>
            <person name="Cherry J.D."/>
            <person name="Heininger U."/>
            <person name="Wirsing von Koenig C.H."/>
            <person name="Burns D.L."/>
        </authorList>
    </citation>
    <scope>POSSIBLE EXPRESSION OF PTL AND PTX PROTEINS UNDER CONDITIONS DIFFERENT FROM B.PERTUSSIS EXPRESSION CONDITIONS</scope>
    <source>
        <strain>ATCC 31437 / Bb55</strain>
    </source>
</reference>
<sequence length="461" mass="48510">MAGLSRILLSCTLACLLAGQAAQASVDDPTRAGGDNRVRALRADQARRDVLLTACRDDPGHRRGEPDCVNAERAQALQQWQAAAMTSVDAAFSDLAGALRNAAPRRMEAAIVRLTRQLQPLVYSMMTLLVLLTGYALLARRDRPFEWHIRHALLVAVVTSLALSPDRYLSTVVAGVQDVAGWLSGPWTAPDGAAGRGGLAQLDQFAAQAQAWVAQLAGQAANDANPGSAVNWLLCAMIVAASAGGWLCLAASLLIVPGLIVTLLLSLGPLFLVLLLFPALQRWTNAWLGALVRALVFMALGTPAVGLLSDVLAGALPAGLPQRFATDPLRSTMLAATLCATATLMLLTLVPLASSVNAGLRRRLWPNAAHPGLAQAHRQAAARQYAPRPAAAAAAAGPHQAGTYAASATPAPARPAPSFPAHAYRQYALGGARRPPPRVRRDDRPAPAPDRRVLPRKPNLP</sequence>
<name>PTLD_BORBR</name>
<organism>
    <name type="scientific">Bordetella bronchiseptica (strain ATCC BAA-588 / NCTC 13252 / RB50)</name>
    <name type="common">Alcaligenes bronchisepticus</name>
    <dbReference type="NCBI Taxonomy" id="257310"/>
    <lineage>
        <taxon>Bacteria</taxon>
        <taxon>Pseudomonadati</taxon>
        <taxon>Pseudomonadota</taxon>
        <taxon>Betaproteobacteria</taxon>
        <taxon>Burkholderiales</taxon>
        <taxon>Alcaligenaceae</taxon>
        <taxon>Bordetella</taxon>
    </lineage>
</organism>